<evidence type="ECO:0000255" key="1">
    <source>
        <dbReference type="HAMAP-Rule" id="MF_01325"/>
    </source>
</evidence>
<evidence type="ECO:0000305" key="2"/>
<dbReference type="EMBL" id="CP000606">
    <property type="protein sequence ID" value="ABO22030.1"/>
    <property type="molecule type" value="Genomic_DNA"/>
</dbReference>
<dbReference type="RefSeq" id="WP_011863966.1">
    <property type="nucleotide sequence ID" value="NC_009092.1"/>
</dbReference>
<dbReference type="SMR" id="A3Q982"/>
<dbReference type="STRING" id="323850.Shew_0158"/>
<dbReference type="KEGG" id="slo:Shew_0158"/>
<dbReference type="eggNOG" id="COG0087">
    <property type="taxonomic scope" value="Bacteria"/>
</dbReference>
<dbReference type="HOGENOM" id="CLU_044142_4_1_6"/>
<dbReference type="OrthoDB" id="9806135at2"/>
<dbReference type="Proteomes" id="UP000001558">
    <property type="component" value="Chromosome"/>
</dbReference>
<dbReference type="GO" id="GO:0022625">
    <property type="term" value="C:cytosolic large ribosomal subunit"/>
    <property type="evidence" value="ECO:0007669"/>
    <property type="project" value="TreeGrafter"/>
</dbReference>
<dbReference type="GO" id="GO:0019843">
    <property type="term" value="F:rRNA binding"/>
    <property type="evidence" value="ECO:0007669"/>
    <property type="project" value="UniProtKB-UniRule"/>
</dbReference>
<dbReference type="GO" id="GO:0003735">
    <property type="term" value="F:structural constituent of ribosome"/>
    <property type="evidence" value="ECO:0007669"/>
    <property type="project" value="InterPro"/>
</dbReference>
<dbReference type="GO" id="GO:0006412">
    <property type="term" value="P:translation"/>
    <property type="evidence" value="ECO:0007669"/>
    <property type="project" value="UniProtKB-UniRule"/>
</dbReference>
<dbReference type="FunFam" id="2.40.30.10:FF:000004">
    <property type="entry name" value="50S ribosomal protein L3"/>
    <property type="match status" value="1"/>
</dbReference>
<dbReference type="FunFam" id="3.30.160.810:FF:000001">
    <property type="entry name" value="50S ribosomal protein L3"/>
    <property type="match status" value="1"/>
</dbReference>
<dbReference type="Gene3D" id="3.30.160.810">
    <property type="match status" value="1"/>
</dbReference>
<dbReference type="Gene3D" id="2.40.30.10">
    <property type="entry name" value="Translation factors"/>
    <property type="match status" value="1"/>
</dbReference>
<dbReference type="HAMAP" id="MF_01325_B">
    <property type="entry name" value="Ribosomal_uL3_B"/>
    <property type="match status" value="1"/>
</dbReference>
<dbReference type="InterPro" id="IPR000597">
    <property type="entry name" value="Ribosomal_uL3"/>
</dbReference>
<dbReference type="InterPro" id="IPR019927">
    <property type="entry name" value="Ribosomal_uL3_bac/org-type"/>
</dbReference>
<dbReference type="InterPro" id="IPR019926">
    <property type="entry name" value="Ribosomal_uL3_CS"/>
</dbReference>
<dbReference type="InterPro" id="IPR009000">
    <property type="entry name" value="Transl_B-barrel_sf"/>
</dbReference>
<dbReference type="NCBIfam" id="TIGR03625">
    <property type="entry name" value="L3_bact"/>
    <property type="match status" value="1"/>
</dbReference>
<dbReference type="PANTHER" id="PTHR11229">
    <property type="entry name" value="50S RIBOSOMAL PROTEIN L3"/>
    <property type="match status" value="1"/>
</dbReference>
<dbReference type="PANTHER" id="PTHR11229:SF16">
    <property type="entry name" value="LARGE RIBOSOMAL SUBUNIT PROTEIN UL3C"/>
    <property type="match status" value="1"/>
</dbReference>
<dbReference type="Pfam" id="PF00297">
    <property type="entry name" value="Ribosomal_L3"/>
    <property type="match status" value="1"/>
</dbReference>
<dbReference type="SUPFAM" id="SSF50447">
    <property type="entry name" value="Translation proteins"/>
    <property type="match status" value="1"/>
</dbReference>
<dbReference type="PROSITE" id="PS00474">
    <property type="entry name" value="RIBOSOMAL_L3"/>
    <property type="match status" value="1"/>
</dbReference>
<keyword id="KW-0488">Methylation</keyword>
<keyword id="KW-1185">Reference proteome</keyword>
<keyword id="KW-0687">Ribonucleoprotein</keyword>
<keyword id="KW-0689">Ribosomal protein</keyword>
<keyword id="KW-0694">RNA-binding</keyword>
<keyword id="KW-0699">rRNA-binding</keyword>
<name>RL3_SHELP</name>
<gene>
    <name evidence="1" type="primary">rplC</name>
    <name type="ordered locus">Shew_0158</name>
</gene>
<organism>
    <name type="scientific">Shewanella loihica (strain ATCC BAA-1088 / PV-4)</name>
    <dbReference type="NCBI Taxonomy" id="323850"/>
    <lineage>
        <taxon>Bacteria</taxon>
        <taxon>Pseudomonadati</taxon>
        <taxon>Pseudomonadota</taxon>
        <taxon>Gammaproteobacteria</taxon>
        <taxon>Alteromonadales</taxon>
        <taxon>Shewanellaceae</taxon>
        <taxon>Shewanella</taxon>
    </lineage>
</organism>
<proteinExistence type="inferred from homology"/>
<comment type="function">
    <text evidence="1">One of the primary rRNA binding proteins, it binds directly near the 3'-end of the 23S rRNA, where it nucleates assembly of the 50S subunit.</text>
</comment>
<comment type="subunit">
    <text evidence="1">Part of the 50S ribosomal subunit. Forms a cluster with proteins L14 and L19.</text>
</comment>
<comment type="PTM">
    <text evidence="1">Methylated by PrmB.</text>
</comment>
<comment type="similarity">
    <text evidence="1">Belongs to the universal ribosomal protein uL3 family.</text>
</comment>
<protein>
    <recommendedName>
        <fullName evidence="1">Large ribosomal subunit protein uL3</fullName>
    </recommendedName>
    <alternativeName>
        <fullName evidence="2">50S ribosomal protein L3</fullName>
    </alternativeName>
</protein>
<accession>A3Q982</accession>
<sequence length="212" mass="22470">MAIGLIGRKVGMTRIFTEDGASIPVTVIEIAANRVAQVKTLETDGYRALQITTGTKKANRITKPEAGHFAKAGVEAGRGLWEMRLADGEGEGIEVGAELNVDIFADVAKVDVTGQSKGKGFQGGIKRWNFRTQDATHGNSLAHRANGSIGQNQTPGRVFKGKKMSGHMGAERVTTQNLDVVRVDAERNLLLVKGAVPGATNGDLIIKPAVKA</sequence>
<feature type="chain" id="PRO_1000052137" description="Large ribosomal subunit protein uL3">
    <location>
        <begin position="1"/>
        <end position="212"/>
    </location>
</feature>
<feature type="modified residue" description="N5-methylglutamine" evidence="1">
    <location>
        <position position="153"/>
    </location>
</feature>
<reference key="1">
    <citation type="submission" date="2007-03" db="EMBL/GenBank/DDBJ databases">
        <title>Complete sequence of Shewanella loihica PV-4.</title>
        <authorList>
            <consortium name="US DOE Joint Genome Institute"/>
            <person name="Copeland A."/>
            <person name="Lucas S."/>
            <person name="Lapidus A."/>
            <person name="Barry K."/>
            <person name="Detter J.C."/>
            <person name="Glavina del Rio T."/>
            <person name="Hammon N."/>
            <person name="Israni S."/>
            <person name="Dalin E."/>
            <person name="Tice H."/>
            <person name="Pitluck S."/>
            <person name="Chain P."/>
            <person name="Malfatti S."/>
            <person name="Shin M."/>
            <person name="Vergez L."/>
            <person name="Schmutz J."/>
            <person name="Larimer F."/>
            <person name="Land M."/>
            <person name="Hauser L."/>
            <person name="Kyrpides N."/>
            <person name="Mikhailova N."/>
            <person name="Romine M.F."/>
            <person name="Serres G."/>
            <person name="Fredrickson J."/>
            <person name="Tiedje J."/>
            <person name="Richardson P."/>
        </authorList>
    </citation>
    <scope>NUCLEOTIDE SEQUENCE [LARGE SCALE GENOMIC DNA]</scope>
    <source>
        <strain>ATCC BAA-1088 / PV-4</strain>
    </source>
</reference>